<gene>
    <name evidence="10" type="primary">LTPG4</name>
    <name evidence="9" type="synonym">XYLP3</name>
    <name evidence="9" type="synonym">XYP3</name>
    <name evidence="12" type="ordered locus">At4g08670</name>
    <name evidence="13" type="ORF">T3F12.2</name>
</gene>
<protein>
    <recommendedName>
        <fullName evidence="10">Non-specific lipid transfer protein GPI-anchored 4</fullName>
        <shortName evidence="10">AtLTPG-4</shortName>
        <shortName evidence="10">Protein LTP-GPI-ANCHORED 4</shortName>
    </recommendedName>
    <alternativeName>
        <fullName evidence="9">Xylogen like protein 3</fullName>
        <shortName evidence="9">AtXYLP3</shortName>
        <shortName evidence="9">AtXYP3</shortName>
    </alternativeName>
</protein>
<keyword id="KW-1003">Cell membrane</keyword>
<keyword id="KW-1015">Disulfide bond</keyword>
<keyword id="KW-0325">Glycoprotein</keyword>
<keyword id="KW-0336">GPI-anchor</keyword>
<keyword id="KW-0449">Lipoprotein</keyword>
<keyword id="KW-0472">Membrane</keyword>
<keyword id="KW-1185">Reference proteome</keyword>
<keyword id="KW-0732">Signal</keyword>
<comment type="function">
    <text evidence="8">Lipid transfer protein involved in seed and ovule maturation and development, probably by regulating the fatty acids homeostasis during suberin and sporopollenin biosynthesis or deposition.</text>
</comment>
<comment type="subcellular location">
    <subcellularLocation>
        <location evidence="2">Cell membrane</location>
        <topology evidence="2">Lipid-anchor</topology>
        <topology evidence="2">GPI-anchor</topology>
    </subcellularLocation>
</comment>
<comment type="tissue specificity">
    <text evidence="5 6 7">Confined to the anthers and stamen of the inflorescence, especially in pollen.</text>
</comment>
<comment type="developmental stage">
    <text evidence="6">In the anthers, specifically expressed in pollen, with levels varying during the different developmental stages.</text>
</comment>
<comment type="disruption phenotype">
    <text evidence="8">Some early aborted shrunken and deformed seeds, with abnormal hair-like outgrowths, and infertile ovules, and increased salt permeability in seeds associated with an increase in unsubstituted fatty acids but a decrease in omega-hydroxy fatty acids in seed coats.</text>
</comment>
<comment type="similarity">
    <text evidence="11">Belongs to the plant LTP family.</text>
</comment>
<comment type="sequence caution" evidence="11">
    <conflict type="erroneous gene model prediction">
        <sequence resource="EMBL-CDS" id="AAB81871"/>
    </conflict>
</comment>
<comment type="sequence caution" evidence="11">
    <conflict type="erroneous gene model prediction">
        <sequence resource="EMBL-CDS" id="CAB77992"/>
    </conflict>
</comment>
<sequence>MKQSLLLSFVLLLLSSSSLVTPIHARNKSNPAKSPVGAPAPGPSSSDCSTVIYSMMDCLGYLGVGSNETKPEKSCCTGIETVLQYNPQCICAGLVSAGEMGIELNSTRALATPKACKLSIAPPHCGIITSGATTPGASPVSPSAGAPTTSPSAAKSPETSATSPSSDETPSMTAPSPSSSGTNILSVPALTIVFVIVSSVAYISAFSN</sequence>
<organism>
    <name type="scientific">Arabidopsis thaliana</name>
    <name type="common">Mouse-ear cress</name>
    <dbReference type="NCBI Taxonomy" id="3702"/>
    <lineage>
        <taxon>Eukaryota</taxon>
        <taxon>Viridiplantae</taxon>
        <taxon>Streptophyta</taxon>
        <taxon>Embryophyta</taxon>
        <taxon>Tracheophyta</taxon>
        <taxon>Spermatophyta</taxon>
        <taxon>Magnoliopsida</taxon>
        <taxon>eudicotyledons</taxon>
        <taxon>Gunneridae</taxon>
        <taxon>Pentapetalae</taxon>
        <taxon>rosids</taxon>
        <taxon>malvids</taxon>
        <taxon>Brassicales</taxon>
        <taxon>Brassicaceae</taxon>
        <taxon>Camelineae</taxon>
        <taxon>Arabidopsis</taxon>
    </lineage>
</organism>
<feature type="signal peptide" evidence="2">
    <location>
        <begin position="1"/>
        <end position="25"/>
    </location>
</feature>
<feature type="chain" id="PRO_5014308757" description="Non-specific lipid transfer protein GPI-anchored 4">
    <location>
        <begin position="26"/>
        <end position="179"/>
    </location>
</feature>
<feature type="propeptide" id="PRO_0000451637" description="Removed in mature form" evidence="2">
    <location>
        <begin position="180"/>
        <end position="208"/>
    </location>
</feature>
<feature type="region of interest" description="Disordered" evidence="4">
    <location>
        <begin position="136"/>
        <end position="181"/>
    </location>
</feature>
<feature type="lipid moiety-binding region" description="GPI-anchor amidated serine" evidence="2">
    <location>
        <position position="179"/>
    </location>
</feature>
<feature type="glycosylation site" description="N-linked (GlcNAc...) asparagine" evidence="3">
    <location>
        <position position="27"/>
    </location>
</feature>
<feature type="glycosylation site" description="N-linked (GlcNAc...) asparagine" evidence="3">
    <location>
        <position position="67"/>
    </location>
</feature>
<feature type="glycosylation site" description="N-linked (GlcNAc...) asparagine" evidence="3">
    <location>
        <position position="105"/>
    </location>
</feature>
<feature type="disulfide bond" evidence="1">
    <location>
        <begin position="48"/>
        <end position="91"/>
    </location>
</feature>
<feature type="disulfide bond" evidence="1">
    <location>
        <begin position="58"/>
        <end position="75"/>
    </location>
</feature>
<feature type="disulfide bond" evidence="1">
    <location>
        <begin position="76"/>
        <end position="116"/>
    </location>
</feature>
<feature type="disulfide bond" evidence="1">
    <location>
        <begin position="89"/>
        <end position="125"/>
    </location>
</feature>
<name>LTPG4_ARATH</name>
<reference key="1">
    <citation type="journal article" date="2011" name="Plant Cell Physiol.">
        <title>Expression and genome-wide analysis of the xylogen-type gene family.</title>
        <authorList>
            <person name="Kobayashi Y."/>
            <person name="Motose H."/>
            <person name="Iwamoto K."/>
            <person name="Fukuda H."/>
        </authorList>
    </citation>
    <scope>NUCLEOTIDE SEQUENCE [MRNA]</scope>
    <scope>TISSUE SPECIFICITY</scope>
    <scope>DEVELOPMENTAL STAGE</scope>
    <scope>GENE FAMILY</scope>
    <scope>NOMENCLATURE</scope>
    <source>
        <strain>cv. Columbia</strain>
    </source>
</reference>
<reference key="2">
    <citation type="journal article" date="1999" name="Nature">
        <title>Sequence and analysis of chromosome 4 of the plant Arabidopsis thaliana.</title>
        <authorList>
            <person name="Mayer K.F.X."/>
            <person name="Schueller C."/>
            <person name="Wambutt R."/>
            <person name="Murphy G."/>
            <person name="Volckaert G."/>
            <person name="Pohl T."/>
            <person name="Duesterhoeft A."/>
            <person name="Stiekema W."/>
            <person name="Entian K.-D."/>
            <person name="Terryn N."/>
            <person name="Harris B."/>
            <person name="Ansorge W."/>
            <person name="Brandt P."/>
            <person name="Grivell L.A."/>
            <person name="Rieger M."/>
            <person name="Weichselgartner M."/>
            <person name="de Simone V."/>
            <person name="Obermaier B."/>
            <person name="Mache R."/>
            <person name="Mueller M."/>
            <person name="Kreis M."/>
            <person name="Delseny M."/>
            <person name="Puigdomenech P."/>
            <person name="Watson M."/>
            <person name="Schmidtheini T."/>
            <person name="Reichert B."/>
            <person name="Portetelle D."/>
            <person name="Perez-Alonso M."/>
            <person name="Boutry M."/>
            <person name="Bancroft I."/>
            <person name="Vos P."/>
            <person name="Hoheisel J."/>
            <person name="Zimmermann W."/>
            <person name="Wedler H."/>
            <person name="Ridley P."/>
            <person name="Langham S.-A."/>
            <person name="McCullagh B."/>
            <person name="Bilham L."/>
            <person name="Robben J."/>
            <person name="van der Schueren J."/>
            <person name="Grymonprez B."/>
            <person name="Chuang Y.-J."/>
            <person name="Vandenbussche F."/>
            <person name="Braeken M."/>
            <person name="Weltjens I."/>
            <person name="Voet M."/>
            <person name="Bastiaens I."/>
            <person name="Aert R."/>
            <person name="Defoor E."/>
            <person name="Weitzenegger T."/>
            <person name="Bothe G."/>
            <person name="Ramsperger U."/>
            <person name="Hilbert H."/>
            <person name="Braun M."/>
            <person name="Holzer E."/>
            <person name="Brandt A."/>
            <person name="Peters S."/>
            <person name="van Staveren M."/>
            <person name="Dirkse W."/>
            <person name="Mooijman P."/>
            <person name="Klein Lankhorst R."/>
            <person name="Rose M."/>
            <person name="Hauf J."/>
            <person name="Koetter P."/>
            <person name="Berneiser S."/>
            <person name="Hempel S."/>
            <person name="Feldpausch M."/>
            <person name="Lamberth S."/>
            <person name="Van den Daele H."/>
            <person name="De Keyser A."/>
            <person name="Buysshaert C."/>
            <person name="Gielen J."/>
            <person name="Villarroel R."/>
            <person name="De Clercq R."/>
            <person name="van Montagu M."/>
            <person name="Rogers J."/>
            <person name="Cronin A."/>
            <person name="Quail M.A."/>
            <person name="Bray-Allen S."/>
            <person name="Clark L."/>
            <person name="Doggett J."/>
            <person name="Hall S."/>
            <person name="Kay M."/>
            <person name="Lennard N."/>
            <person name="McLay K."/>
            <person name="Mayes R."/>
            <person name="Pettett A."/>
            <person name="Rajandream M.A."/>
            <person name="Lyne M."/>
            <person name="Benes V."/>
            <person name="Rechmann S."/>
            <person name="Borkova D."/>
            <person name="Bloecker H."/>
            <person name="Scharfe M."/>
            <person name="Grimm M."/>
            <person name="Loehnert T.-H."/>
            <person name="Dose S."/>
            <person name="de Haan M."/>
            <person name="Maarse A.C."/>
            <person name="Schaefer M."/>
            <person name="Mueller-Auer S."/>
            <person name="Gabel C."/>
            <person name="Fuchs M."/>
            <person name="Fartmann B."/>
            <person name="Granderath K."/>
            <person name="Dauner D."/>
            <person name="Herzl A."/>
            <person name="Neumann S."/>
            <person name="Argiriou A."/>
            <person name="Vitale D."/>
            <person name="Liguori R."/>
            <person name="Piravandi E."/>
            <person name="Massenet O."/>
            <person name="Quigley F."/>
            <person name="Clabauld G."/>
            <person name="Muendlein A."/>
            <person name="Felber R."/>
            <person name="Schnabl S."/>
            <person name="Hiller R."/>
            <person name="Schmidt W."/>
            <person name="Lecharny A."/>
            <person name="Aubourg S."/>
            <person name="Chefdor F."/>
            <person name="Cooke R."/>
            <person name="Berger C."/>
            <person name="Monfort A."/>
            <person name="Casacuberta E."/>
            <person name="Gibbons T."/>
            <person name="Weber N."/>
            <person name="Vandenbol M."/>
            <person name="Bargues M."/>
            <person name="Terol J."/>
            <person name="Torres A."/>
            <person name="Perez-Perez A."/>
            <person name="Purnelle B."/>
            <person name="Bent E."/>
            <person name="Johnson S."/>
            <person name="Tacon D."/>
            <person name="Jesse T."/>
            <person name="Heijnen L."/>
            <person name="Schwarz S."/>
            <person name="Scholler P."/>
            <person name="Heber S."/>
            <person name="Francs P."/>
            <person name="Bielke C."/>
            <person name="Frishman D."/>
            <person name="Haase D."/>
            <person name="Lemcke K."/>
            <person name="Mewes H.-W."/>
            <person name="Stocker S."/>
            <person name="Zaccaria P."/>
            <person name="Bevan M."/>
            <person name="Wilson R.K."/>
            <person name="de la Bastide M."/>
            <person name="Habermann K."/>
            <person name="Parnell L."/>
            <person name="Dedhia N."/>
            <person name="Gnoj L."/>
            <person name="Schutz K."/>
            <person name="Huang E."/>
            <person name="Spiegel L."/>
            <person name="Sekhon M."/>
            <person name="Murray J."/>
            <person name="Sheet P."/>
            <person name="Cordes M."/>
            <person name="Abu-Threideh J."/>
            <person name="Stoneking T."/>
            <person name="Kalicki J."/>
            <person name="Graves T."/>
            <person name="Harmon G."/>
            <person name="Edwards J."/>
            <person name="Latreille P."/>
            <person name="Courtney L."/>
            <person name="Cloud J."/>
            <person name="Abbott A."/>
            <person name="Scott K."/>
            <person name="Johnson D."/>
            <person name="Minx P."/>
            <person name="Bentley D."/>
            <person name="Fulton B."/>
            <person name="Miller N."/>
            <person name="Greco T."/>
            <person name="Kemp K."/>
            <person name="Kramer J."/>
            <person name="Fulton L."/>
            <person name="Mardis E."/>
            <person name="Dante M."/>
            <person name="Pepin K."/>
            <person name="Hillier L.W."/>
            <person name="Nelson J."/>
            <person name="Spieth J."/>
            <person name="Ryan E."/>
            <person name="Andrews S."/>
            <person name="Geisel C."/>
            <person name="Layman D."/>
            <person name="Du H."/>
            <person name="Ali J."/>
            <person name="Berghoff A."/>
            <person name="Jones K."/>
            <person name="Drone K."/>
            <person name="Cotton M."/>
            <person name="Joshu C."/>
            <person name="Antonoiu B."/>
            <person name="Zidanic M."/>
            <person name="Strong C."/>
            <person name="Sun H."/>
            <person name="Lamar B."/>
            <person name="Yordan C."/>
            <person name="Ma P."/>
            <person name="Zhong J."/>
            <person name="Preston R."/>
            <person name="Vil D."/>
            <person name="Shekher M."/>
            <person name="Matero A."/>
            <person name="Shah R."/>
            <person name="Swaby I.K."/>
            <person name="O'Shaughnessy A."/>
            <person name="Rodriguez M."/>
            <person name="Hoffman J."/>
            <person name="Till S."/>
            <person name="Granat S."/>
            <person name="Shohdy N."/>
            <person name="Hasegawa A."/>
            <person name="Hameed A."/>
            <person name="Lodhi M."/>
            <person name="Johnson A."/>
            <person name="Chen E."/>
            <person name="Marra M.A."/>
            <person name="Martienssen R."/>
            <person name="McCombie W.R."/>
        </authorList>
    </citation>
    <scope>NUCLEOTIDE SEQUENCE [LARGE SCALE GENOMIC DNA]</scope>
    <source>
        <strain>cv. Columbia</strain>
    </source>
</reference>
<reference key="3">
    <citation type="journal article" date="2017" name="Plant J.">
        <title>Araport11: a complete reannotation of the Arabidopsis thaliana reference genome.</title>
        <authorList>
            <person name="Cheng C.Y."/>
            <person name="Krishnakumar V."/>
            <person name="Chan A.P."/>
            <person name="Thibaud-Nissen F."/>
            <person name="Schobel S."/>
            <person name="Town C.D."/>
        </authorList>
    </citation>
    <scope>GENOME REANNOTATION</scope>
    <source>
        <strain>cv. Columbia</strain>
    </source>
</reference>
<reference key="4">
    <citation type="journal article" date="2004" name="Plant Cell">
        <title>SETH1 and SETH2, two components of the glycosylphosphatidylinositol anchor biosynthetic pathway, are required for pollen germination and tube growth in Arabidopsis.</title>
        <authorList>
            <person name="Lalanne E."/>
            <person name="Honys D."/>
            <person name="Johnson A."/>
            <person name="Borner G.H.H."/>
            <person name="Lilley K.S."/>
            <person name="Dupree P."/>
            <person name="Grossniklaus U."/>
            <person name="Twell D."/>
        </authorList>
    </citation>
    <scope>TISSUE SPECIFICITY</scope>
</reference>
<reference key="5">
    <citation type="journal article" date="2013" name="Arabidopsis Book">
        <title>Acyl-lipid metabolism.</title>
        <authorList>
            <person name="Li-Beisson Y."/>
            <person name="Shorrosh B."/>
            <person name="Beisson F."/>
            <person name="Andersson M.X."/>
            <person name="Arondel V."/>
            <person name="Bates P.D."/>
            <person name="Baud S."/>
            <person name="Bird D."/>
            <person name="Debono A."/>
            <person name="Durrett T.P."/>
            <person name="Franke R.B."/>
            <person name="Graham I.A."/>
            <person name="Katayama K."/>
            <person name="Kelly A.A."/>
            <person name="Larson T."/>
            <person name="Markham J.E."/>
            <person name="Miquel M."/>
            <person name="Molina I."/>
            <person name="Nishida I."/>
            <person name="Rowland O."/>
            <person name="Samuels L."/>
            <person name="Schmid K.M."/>
            <person name="Wada H."/>
            <person name="Welti R."/>
            <person name="Xu C."/>
            <person name="Zallot R."/>
            <person name="Ohlrogge J."/>
        </authorList>
    </citation>
    <scope>REVIEW</scope>
</reference>
<reference key="6">
    <citation type="journal article" date="2013" name="Plant Mol. Biol.">
        <title>Coexpression patterns indicate that GPI-anchored non-specific lipid transfer proteins are involved in accumulation of cuticular wax, suberin and sporopollenin.</title>
        <authorList>
            <person name="Edstam M.M."/>
            <person name="Blomqvist K."/>
            <person name="Ekloef A."/>
            <person name="Wennergren U."/>
            <person name="Edqvist J."/>
        </authorList>
    </citation>
    <scope>TISSUE SPECIFICITY</scope>
    <scope>GENE FAMILY</scope>
    <scope>NOMENCLATURE</scope>
    <source>
        <strain>cv. Columbia</strain>
    </source>
</reference>
<reference key="7">
    <citation type="journal article" date="2014" name="Physiol. Plantarum">
        <title>Involvement of GPI-anchored lipid transfer proteins in the development of seed coats and pollen in Arabidopsis thaliana.</title>
        <authorList>
            <person name="Edstam M.M."/>
            <person name="Edqvist J."/>
        </authorList>
    </citation>
    <scope>FUNCTION</scope>
    <scope>DISRUPTION PHENOTYPE</scope>
    <scope>GENE FAMILY</scope>
    <source>
        <strain>cv. Columbia</strain>
    </source>
</reference>
<reference key="8">
    <citation type="journal article" date="2019" name="Mol. Plant Pathol.">
        <title>Involvement of lipid transfer proteins in resistance against a non-host powdery mildew in Arabidopsis thaliana.</title>
        <authorList>
            <person name="Fahlberg P."/>
            <person name="Buhot N."/>
            <person name="Johansson O.N."/>
            <person name="Andersson M.X."/>
        </authorList>
    </citation>
    <scope>GENE FAMILY</scope>
    <scope>NOMENCLATURE</scope>
    <source>
        <strain>cv. Columbia</strain>
    </source>
</reference>
<proteinExistence type="evidence at transcript level"/>
<evidence type="ECO:0000250" key="1">
    <source>
        <dbReference type="UniProtKB" id="A0A0B4JDK1"/>
    </source>
</evidence>
<evidence type="ECO:0000255" key="2"/>
<evidence type="ECO:0000255" key="3">
    <source>
        <dbReference type="PROSITE-ProRule" id="PRU00498"/>
    </source>
</evidence>
<evidence type="ECO:0000256" key="4">
    <source>
        <dbReference type="SAM" id="MobiDB-lite"/>
    </source>
</evidence>
<evidence type="ECO:0000269" key="5">
    <source>
    </source>
</evidence>
<evidence type="ECO:0000269" key="6">
    <source>
    </source>
</evidence>
<evidence type="ECO:0000269" key="7">
    <source>
    </source>
</evidence>
<evidence type="ECO:0000269" key="8">
    <source>
    </source>
</evidence>
<evidence type="ECO:0000303" key="9">
    <source>
    </source>
</evidence>
<evidence type="ECO:0000303" key="10">
    <source>
    </source>
</evidence>
<evidence type="ECO:0000305" key="11"/>
<evidence type="ECO:0000312" key="12">
    <source>
        <dbReference type="Araport" id="AT4G08670"/>
    </source>
</evidence>
<evidence type="ECO:0000312" key="13">
    <source>
        <dbReference type="EMBL" id="AAB81871.1"/>
    </source>
</evidence>
<accession>Q2PE70</accession>
<accession>O22272</accession>
<dbReference type="EMBL" id="AB246322">
    <property type="protein sequence ID" value="BAE73259.1"/>
    <property type="molecule type" value="mRNA"/>
</dbReference>
<dbReference type="EMBL" id="AC002983">
    <property type="protein sequence ID" value="AAB81871.1"/>
    <property type="status" value="ALT_SEQ"/>
    <property type="molecule type" value="Genomic_DNA"/>
</dbReference>
<dbReference type="EMBL" id="AL161512">
    <property type="protein sequence ID" value="CAB77992.1"/>
    <property type="status" value="ALT_SEQ"/>
    <property type="molecule type" value="Genomic_DNA"/>
</dbReference>
<dbReference type="EMBL" id="CP002687">
    <property type="protein sequence ID" value="AEE82667.1"/>
    <property type="molecule type" value="Genomic_DNA"/>
</dbReference>
<dbReference type="PIR" id="T00941">
    <property type="entry name" value="T00941"/>
</dbReference>
<dbReference type="RefSeq" id="NP_192607.2">
    <property type="nucleotide sequence ID" value="NM_116936.3"/>
</dbReference>
<dbReference type="STRING" id="3702.Q2PE70"/>
<dbReference type="GlyCosmos" id="Q2PE70">
    <property type="glycosylation" value="3 sites, No reported glycans"/>
</dbReference>
<dbReference type="GlyGen" id="Q2PE70">
    <property type="glycosylation" value="3 sites"/>
</dbReference>
<dbReference type="PaxDb" id="3702-AT4G08670.1"/>
<dbReference type="EnsemblPlants" id="AT4G08670.1">
    <property type="protein sequence ID" value="AT4G08670.1"/>
    <property type="gene ID" value="AT4G08670"/>
</dbReference>
<dbReference type="GeneID" id="826433"/>
<dbReference type="Gramene" id="AT4G08670.1">
    <property type="protein sequence ID" value="AT4G08670.1"/>
    <property type="gene ID" value="AT4G08670"/>
</dbReference>
<dbReference type="KEGG" id="ath:AT4G08670"/>
<dbReference type="Araport" id="AT4G08670"/>
<dbReference type="TAIR" id="AT4G08670">
    <property type="gene designation" value="LTPG4"/>
</dbReference>
<dbReference type="HOGENOM" id="CLU_095117_0_0_1"/>
<dbReference type="InParanoid" id="Q2PE70"/>
<dbReference type="OMA" id="YNPQCIC"/>
<dbReference type="PRO" id="PR:Q2PE70"/>
<dbReference type="Proteomes" id="UP000006548">
    <property type="component" value="Chromosome 4"/>
</dbReference>
<dbReference type="ExpressionAtlas" id="Q2PE70">
    <property type="expression patterns" value="baseline and differential"/>
</dbReference>
<dbReference type="GO" id="GO:0005886">
    <property type="term" value="C:plasma membrane"/>
    <property type="evidence" value="ECO:0007669"/>
    <property type="project" value="UniProtKB-SubCell"/>
</dbReference>
<dbReference type="GO" id="GO:0098552">
    <property type="term" value="C:side of membrane"/>
    <property type="evidence" value="ECO:0007669"/>
    <property type="project" value="UniProtKB-KW"/>
</dbReference>
<dbReference type="GO" id="GO:0008289">
    <property type="term" value="F:lipid binding"/>
    <property type="evidence" value="ECO:0007669"/>
    <property type="project" value="InterPro"/>
</dbReference>
<dbReference type="GO" id="GO:0006869">
    <property type="term" value="P:lipid transport"/>
    <property type="evidence" value="ECO:0007669"/>
    <property type="project" value="InterPro"/>
</dbReference>
<dbReference type="CDD" id="cd00010">
    <property type="entry name" value="AAI_LTSS"/>
    <property type="match status" value="1"/>
</dbReference>
<dbReference type="FunFam" id="1.10.110.10:FF:000001">
    <property type="entry name" value="Bifunctional inhibitor/lipid-transfer protein/seed storage 2S albumin superfamily protein"/>
    <property type="match status" value="1"/>
</dbReference>
<dbReference type="Gene3D" id="1.10.110.10">
    <property type="entry name" value="Plant lipid-transfer and hydrophobic proteins"/>
    <property type="match status" value="1"/>
</dbReference>
<dbReference type="InterPro" id="IPR036312">
    <property type="entry name" value="Bifun_inhib/LTP/seed_sf"/>
</dbReference>
<dbReference type="InterPro" id="IPR016140">
    <property type="entry name" value="Bifunc_inhib/LTP/seed_store"/>
</dbReference>
<dbReference type="InterPro" id="IPR043325">
    <property type="entry name" value="LTSS"/>
</dbReference>
<dbReference type="InterPro" id="IPR000528">
    <property type="entry name" value="Plant_nsLTP"/>
</dbReference>
<dbReference type="PANTHER" id="PTHR33044">
    <property type="entry name" value="BIFUNCTIONAL INHIBITOR/LIPID-TRANSFER PROTEIN/SEED STORAGE 2S ALBUMIN SUPERFAMILY PROTEIN-RELATED"/>
    <property type="match status" value="1"/>
</dbReference>
<dbReference type="Pfam" id="PF14368">
    <property type="entry name" value="LTP_2"/>
    <property type="match status" value="1"/>
</dbReference>
<dbReference type="PRINTS" id="PR00382">
    <property type="entry name" value="LIPIDTRNSFER"/>
</dbReference>
<dbReference type="SMART" id="SM00499">
    <property type="entry name" value="AAI"/>
    <property type="match status" value="1"/>
</dbReference>
<dbReference type="SUPFAM" id="SSF47699">
    <property type="entry name" value="Bifunctional inhibitor/lipid-transfer protein/seed storage 2S albumin"/>
    <property type="match status" value="1"/>
</dbReference>